<name>VGRG5_PSEAE</name>
<dbReference type="EMBL" id="AE004091">
    <property type="protein sequence ID" value="AAG08475.1"/>
    <property type="molecule type" value="Genomic_DNA"/>
</dbReference>
<dbReference type="PIR" id="D83011">
    <property type="entry name" value="D83011"/>
</dbReference>
<dbReference type="RefSeq" id="NP_253777.1">
    <property type="nucleotide sequence ID" value="NC_002516.2"/>
</dbReference>
<dbReference type="RefSeq" id="WP_003114455.1">
    <property type="nucleotide sequence ID" value="NC_002516.2"/>
</dbReference>
<dbReference type="SMR" id="Q9HU93"/>
<dbReference type="STRING" id="208964.PA5090"/>
<dbReference type="PaxDb" id="208964-PA5090"/>
<dbReference type="GeneID" id="882228"/>
<dbReference type="KEGG" id="pae:PA5090"/>
<dbReference type="PATRIC" id="fig|208964.12.peg.5335"/>
<dbReference type="PseudoCAP" id="PA5090"/>
<dbReference type="HOGENOM" id="CLU_004121_7_0_6"/>
<dbReference type="InParanoid" id="Q9HU93"/>
<dbReference type="OrthoDB" id="9762420at2"/>
<dbReference type="PhylomeDB" id="Q9HU93"/>
<dbReference type="BioCyc" id="PAER208964:G1FZ6-5205-MONOMER"/>
<dbReference type="Proteomes" id="UP000002438">
    <property type="component" value="Chromosome"/>
</dbReference>
<dbReference type="GO" id="GO:0005576">
    <property type="term" value="C:extracellular region"/>
    <property type="evidence" value="ECO:0007669"/>
    <property type="project" value="UniProtKB-SubCell"/>
</dbReference>
<dbReference type="GO" id="GO:0033104">
    <property type="term" value="C:type VI protein secretion system complex"/>
    <property type="evidence" value="ECO:0000318"/>
    <property type="project" value="GO_Central"/>
</dbReference>
<dbReference type="GO" id="GO:0033103">
    <property type="term" value="P:protein secretion by the type VI secretion system"/>
    <property type="evidence" value="ECO:0000318"/>
    <property type="project" value="GO_Central"/>
</dbReference>
<dbReference type="Gene3D" id="2.30.110.50">
    <property type="match status" value="1"/>
</dbReference>
<dbReference type="Gene3D" id="4.10.220.110">
    <property type="match status" value="1"/>
</dbReference>
<dbReference type="Gene3D" id="3.55.50.10">
    <property type="entry name" value="Baseplate protein-like domains"/>
    <property type="match status" value="1"/>
</dbReference>
<dbReference type="Gene3D" id="2.40.50.230">
    <property type="entry name" value="Gp5 N-terminal domain"/>
    <property type="match status" value="1"/>
</dbReference>
<dbReference type="InterPro" id="IPR006531">
    <property type="entry name" value="Gp5/Vgr_OB"/>
</dbReference>
<dbReference type="InterPro" id="IPR054030">
    <property type="entry name" value="Gp5_Vgr_C"/>
</dbReference>
<dbReference type="InterPro" id="IPR017847">
    <property type="entry name" value="T6SS_RhsGE_Vgr_subset"/>
</dbReference>
<dbReference type="InterPro" id="IPR006533">
    <property type="entry name" value="T6SS_Vgr_RhsGE"/>
</dbReference>
<dbReference type="InterPro" id="IPR050708">
    <property type="entry name" value="T6SS_VgrG/RHS"/>
</dbReference>
<dbReference type="InterPro" id="IPR037026">
    <property type="entry name" value="Vgr_OB-fold_dom_sf"/>
</dbReference>
<dbReference type="NCBIfam" id="TIGR01646">
    <property type="entry name" value="vgr_GE"/>
    <property type="match status" value="1"/>
</dbReference>
<dbReference type="NCBIfam" id="TIGR03361">
    <property type="entry name" value="VI_Rhs_Vgr"/>
    <property type="match status" value="1"/>
</dbReference>
<dbReference type="PANTHER" id="PTHR32305">
    <property type="match status" value="1"/>
</dbReference>
<dbReference type="PANTHER" id="PTHR32305:SF15">
    <property type="entry name" value="PROTEIN RHSA-RELATED"/>
    <property type="match status" value="1"/>
</dbReference>
<dbReference type="Pfam" id="PF22178">
    <property type="entry name" value="Gp5_trimer_C"/>
    <property type="match status" value="1"/>
</dbReference>
<dbReference type="Pfam" id="PF04717">
    <property type="entry name" value="Phage_base_V"/>
    <property type="match status" value="1"/>
</dbReference>
<dbReference type="Pfam" id="PF05954">
    <property type="entry name" value="Phage_GPD"/>
    <property type="match status" value="1"/>
</dbReference>
<dbReference type="SUPFAM" id="SSF69255">
    <property type="entry name" value="gp5 N-terminal domain-like"/>
    <property type="match status" value="1"/>
</dbReference>
<dbReference type="SUPFAM" id="SSF69349">
    <property type="entry name" value="Phage fibre proteins"/>
    <property type="match status" value="1"/>
</dbReference>
<dbReference type="SUPFAM" id="SSF69279">
    <property type="entry name" value="Phage tail proteins"/>
    <property type="match status" value="2"/>
</dbReference>
<proteinExistence type="inferred from homology"/>
<protein>
    <recommendedName>
        <fullName evidence="3">Type VI secretion system spike protein VgrG5</fullName>
    </recommendedName>
</protein>
<gene>
    <name evidence="3" type="primary">vgrG5</name>
    <name type="ordered locus">PA5090</name>
</gene>
<comment type="function">
    <text evidence="2">Part of the H2 type VI secretion system (H2-T6SS) specialized secretion system, which delivers several virulence factors in both prokaryotic and eukaryotic cells during infection. Allows the delivery of the phospholipase effector PldB to target cells where it exerts its toxicity. Also plays a role in VgrG4b and its effector PldA secretion.</text>
</comment>
<comment type="subcellular location">
    <subcellularLocation>
        <location evidence="2">Secreted</location>
    </subcellularLocation>
</comment>
<comment type="disruption phenotype">
    <text evidence="2">Deletion leads to a complete loss of PldA, PldB and VgrG4b secretion.</text>
</comment>
<comment type="similarity">
    <text evidence="4">Belongs to the VgrG protein family.</text>
</comment>
<sequence>MFAPANQTHFSLRIENLRHDFQVLAFRGREAISQPFRFDLELVSERSDLDLDALLHQPAFLILSPSGQGVHGQLTSIAQGDSGKRLTGYRATLEPRLAYLGLCSDQRIFQRLSVPEIIGRVLEGHGILADAYRFQLGPTPYPAREYCTQYDETDLAFLSRLCEEEGIHYHHEFSAQGHVLVFGDDQTSFPRLQRPVAYVQDAGLVADQPVVKRFGVRFDTRASRVTRRDYDFEQPALQMQAAHGPQPGAQQPDLEDYDYPGRFTHRERGKHLSHRALERHRADYLQARGESDEPALLSGHFLTLSAHPRGEWNDLWLLTEVLHEGRQPQVLEESIDSDVAQGQGDFRQGYRNHFVATPWSAHFRPPLEHPRPRVLGCQTAVVTGPAGETIHCDQYGRVKVQFFWDRLGQADDNTSCWLRVASNWGGKRYGGVAIPRVGMEVLVGFLEGDPDQPLVTGCLYHSENRVPYELPQNKTRSVFKTDSYPGGGGFNELRIEDRKGQEQIFVHAQRDWDENIEHDQKIRVGHERHDTVEGDSYSEFRAEEQRTVHADRKVELKAADHLSVADALHLRIGTGQFVEAGDEIHFKAGDKVVIEAGMELTLKGGGSFARLDPGGVTLDGAQVMINSGGSPGIGSGVRALSPLQPLAADAAAAGGALLGAIAQKIGEAPQKLLRFELSPLPGVASAARQPYRLYANGAFKEEGIADEGGAISFEPLPGERTYRIETANGHAYEVEMVDQPDALQADDRLAQQGFRDYRAEMPQHKPRSAPDAYRRDASRPGAADKDEPTP</sequence>
<organism>
    <name type="scientific">Pseudomonas aeruginosa (strain ATCC 15692 / DSM 22644 / CIP 104116 / JCM 14847 / LMG 12228 / 1C / PRS 101 / PAO1)</name>
    <dbReference type="NCBI Taxonomy" id="208964"/>
    <lineage>
        <taxon>Bacteria</taxon>
        <taxon>Pseudomonadati</taxon>
        <taxon>Pseudomonadota</taxon>
        <taxon>Gammaproteobacteria</taxon>
        <taxon>Pseudomonadales</taxon>
        <taxon>Pseudomonadaceae</taxon>
        <taxon>Pseudomonas</taxon>
    </lineage>
</organism>
<keyword id="KW-1185">Reference proteome</keyword>
<keyword id="KW-0964">Secreted</keyword>
<feature type="chain" id="PRO_0000448917" description="Type VI secretion system spike protein VgrG5">
    <location>
        <begin position="1"/>
        <end position="790"/>
    </location>
</feature>
<feature type="region of interest" description="Disordered" evidence="1">
    <location>
        <begin position="753"/>
        <end position="790"/>
    </location>
</feature>
<feature type="compositionally biased region" description="Basic and acidic residues" evidence="1">
    <location>
        <begin position="753"/>
        <end position="763"/>
    </location>
</feature>
<feature type="compositionally biased region" description="Basic and acidic residues" evidence="1">
    <location>
        <begin position="772"/>
        <end position="790"/>
    </location>
</feature>
<evidence type="ECO:0000256" key="1">
    <source>
        <dbReference type="SAM" id="MobiDB-lite"/>
    </source>
</evidence>
<evidence type="ECO:0000269" key="2">
    <source>
    </source>
</evidence>
<evidence type="ECO:0000303" key="3">
    <source>
    </source>
</evidence>
<evidence type="ECO:0000305" key="4"/>
<reference key="1">
    <citation type="journal article" date="2000" name="Nature">
        <title>Complete genome sequence of Pseudomonas aeruginosa PAO1, an opportunistic pathogen.</title>
        <authorList>
            <person name="Stover C.K."/>
            <person name="Pham X.-Q.T."/>
            <person name="Erwin A.L."/>
            <person name="Mizoguchi S.D."/>
            <person name="Warrener P."/>
            <person name="Hickey M.J."/>
            <person name="Brinkman F.S.L."/>
            <person name="Hufnagle W.O."/>
            <person name="Kowalik D.J."/>
            <person name="Lagrou M."/>
            <person name="Garber R.L."/>
            <person name="Goltry L."/>
            <person name="Tolentino E."/>
            <person name="Westbrock-Wadman S."/>
            <person name="Yuan Y."/>
            <person name="Brody L.L."/>
            <person name="Coulter S.N."/>
            <person name="Folger K.R."/>
            <person name="Kas A."/>
            <person name="Larbig K."/>
            <person name="Lim R.M."/>
            <person name="Smith K.A."/>
            <person name="Spencer D.H."/>
            <person name="Wong G.K.-S."/>
            <person name="Wu Z."/>
            <person name="Paulsen I.T."/>
            <person name="Reizer J."/>
            <person name="Saier M.H. Jr."/>
            <person name="Hancock R.E.W."/>
            <person name="Lory S."/>
            <person name="Olson M.V."/>
        </authorList>
    </citation>
    <scope>NUCLEOTIDE SEQUENCE [LARGE SCALE GENOMIC DNA]</scope>
    <source>
        <strain>ATCC 15692 / DSM 22644 / CIP 104116 / JCM 14847 / LMG 12228 / 1C / PRS 101 / PAO1</strain>
    </source>
</reference>
<reference key="2">
    <citation type="journal article" date="2019" name="Front. Microbiol.">
        <title>Delivery of the Pseudomonas aeruginosa Phospholipase Effectors PldA and PldB in a VgrG- and H2-T6SS-Dependent Manner.</title>
        <authorList>
            <person name="Wettstadt S."/>
            <person name="Wood T.E."/>
            <person name="Fecht S."/>
            <person name="Filloux A."/>
        </authorList>
    </citation>
    <scope>FUNCTION</scope>
    <scope>DISRUPTION PHENOTYPE</scope>
    <scope>SUBCELLULAR LOCATION</scope>
    <source>
        <strain>ATCC 15692 / DSM 22644 / CIP 104116 / JCM 14847 / LMG 12228 / 1C / PRS 101 / PAO1</strain>
    </source>
</reference>
<accession>Q9HU93</accession>